<gene>
    <name evidence="7" type="primary">CLE12</name>
    <name evidence="10" type="ordered locus">MTR_4g079630</name>
    <name evidence="11" type="ORF">MtrunA17_Chr4g0040971</name>
</gene>
<keyword id="KW-0221">Differentiation</keyword>
<keyword id="KW-0325">Glycoprotein</keyword>
<keyword id="KW-0379">Hydroxylation</keyword>
<keyword id="KW-1185">Reference proteome</keyword>
<keyword id="KW-0964">Secreted</keyword>
<keyword id="KW-0732">Signal</keyword>
<feature type="signal peptide" evidence="2">
    <location>
        <begin position="1"/>
        <end position="31"/>
    </location>
</feature>
<feature type="chain" id="PRO_0000448632" description="CLAVATA3/ESR (CLE)-related protein 12" evidence="2">
    <location>
        <begin position="32"/>
        <end position="81"/>
    </location>
</feature>
<feature type="peptide" id="PRO_0000448633" description="CLE12p">
    <location>
        <begin position="69"/>
        <end position="81"/>
    </location>
</feature>
<feature type="region of interest" description="Disordered" evidence="3">
    <location>
        <begin position="55"/>
        <end position="81"/>
    </location>
</feature>
<feature type="compositionally biased region" description="Basic and acidic residues" evidence="3">
    <location>
        <begin position="55"/>
        <end position="67"/>
    </location>
</feature>
<feature type="modified residue" description="Hydroxyproline" evidence="1">
    <location>
        <position position="73"/>
    </location>
</feature>
<feature type="modified residue" description="Hydroxyproline" evidence="1">
    <location>
        <position position="76"/>
    </location>
</feature>
<feature type="glycosylation site" description="O-linked (Ara...) hydroxyproline" evidence="1">
    <location>
        <position position="76"/>
    </location>
</feature>
<comment type="function">
    <molecule>CLE12p</molecule>
    <text evidence="4 5 9">Signaling peptide involved in the regulation of nodulation (PubMed:20348212). Moves from root to shoot to function with the receptor kinase SUNN, in a signaling pathway that plays roles during cellular differentiation, both at the onset of nodulation, and later during nodule meristem development and subsequent homeostasis (PubMed:20348212). Interacts with SUNN signaling to control nodule numbers (PubMed:22168914). SUNN is involved in the autoregulation of nodulation (AON), a long distance systemic signaling from root to shoot and back again, which allows legumes to limit the number of root nodules formed based on available nitrogen and previous rhizobial colonization (Probable).</text>
</comment>
<comment type="subcellular location">
    <molecule>CLE12p</molecule>
    <subcellularLocation>
        <location evidence="8">Secreted</location>
        <location evidence="8">Extracellular space</location>
    </subcellularLocation>
</comment>
<comment type="tissue specificity">
    <molecule>CLE12p</molecule>
    <text evidence="4">Expressed in young nodules throughout the central tissue (PubMed:20348212). Expressed in the apical region of elongated nodules, corresponding to the meristematic and early infection zones (PubMed:20348212).</text>
</comment>
<comment type="induction">
    <molecule>CLE12p</molecule>
    <text evidence="4">Induced in roots during nodulation triggered by low nitrogen and infection with Sinorhizobium meliloti.</text>
</comment>
<comment type="PTM">
    <molecule>CLE12p</molecule>
    <text evidence="1">The O-glycosylation (arabinosylation) of the hydroxyproline Pro-76 enhances binding affinity of the CLE12p peptide for its receptor.</text>
</comment>
<comment type="miscellaneous">
    <molecule>CLE12p</molecule>
    <text evidence="5 6">Overexpression of CL12 in roots almost abolishes nodule formation when inoculated with Sinorhizobium species (PubMed:28592666). Roots of plants silencing CLE12 and CLE13 exhibit increased number of nodules after infection with Sinorhizobium meliloti (PubMed:22168914).</text>
</comment>
<comment type="similarity">
    <text evidence="8">Belongs to the CLV3/ESR signal peptide family.</text>
</comment>
<reference key="1">
    <citation type="journal article" date="2011" name="Nature">
        <title>The Medicago genome provides insight into the evolution of rhizobial symbioses.</title>
        <authorList>
            <person name="Young N.D."/>
            <person name="Debelle F."/>
            <person name="Oldroyd G.E.D."/>
            <person name="Geurts R."/>
            <person name="Cannon S.B."/>
            <person name="Udvardi M.K."/>
            <person name="Benedito V.A."/>
            <person name="Mayer K.F.X."/>
            <person name="Gouzy J."/>
            <person name="Schoof H."/>
            <person name="Van de Peer Y."/>
            <person name="Proost S."/>
            <person name="Cook D.R."/>
            <person name="Meyers B.C."/>
            <person name="Spannagl M."/>
            <person name="Cheung F."/>
            <person name="De Mita S."/>
            <person name="Krishnakumar V."/>
            <person name="Gundlach H."/>
            <person name="Zhou S."/>
            <person name="Mudge J."/>
            <person name="Bharti A.K."/>
            <person name="Murray J.D."/>
            <person name="Naoumkina M.A."/>
            <person name="Rosen B."/>
            <person name="Silverstein K.A.T."/>
            <person name="Tang H."/>
            <person name="Rombauts S."/>
            <person name="Zhao P.X."/>
            <person name="Zhou P."/>
            <person name="Barbe V."/>
            <person name="Bardou P."/>
            <person name="Bechner M."/>
            <person name="Bellec A."/>
            <person name="Berger A."/>
            <person name="Berges H."/>
            <person name="Bidwell S."/>
            <person name="Bisseling T."/>
            <person name="Choisne N."/>
            <person name="Couloux A."/>
            <person name="Denny R."/>
            <person name="Deshpande S."/>
            <person name="Dai X."/>
            <person name="Doyle J.J."/>
            <person name="Dudez A.-M."/>
            <person name="Farmer A.D."/>
            <person name="Fouteau S."/>
            <person name="Franken C."/>
            <person name="Gibelin C."/>
            <person name="Gish J."/>
            <person name="Goldstein S."/>
            <person name="Gonzalez A.J."/>
            <person name="Green P.J."/>
            <person name="Hallab A."/>
            <person name="Hartog M."/>
            <person name="Hua A."/>
            <person name="Humphray S.J."/>
            <person name="Jeong D.-H."/>
            <person name="Jing Y."/>
            <person name="Jocker A."/>
            <person name="Kenton S.M."/>
            <person name="Kim D.-J."/>
            <person name="Klee K."/>
            <person name="Lai H."/>
            <person name="Lang C."/>
            <person name="Lin S."/>
            <person name="Macmil S.L."/>
            <person name="Magdelenat G."/>
            <person name="Matthews L."/>
            <person name="McCorrison J."/>
            <person name="Monaghan E.L."/>
            <person name="Mun J.-H."/>
            <person name="Najar F.Z."/>
            <person name="Nicholson C."/>
            <person name="Noirot C."/>
            <person name="O'Bleness M."/>
            <person name="Paule C.R."/>
            <person name="Poulain J."/>
            <person name="Prion F."/>
            <person name="Qin B."/>
            <person name="Qu C."/>
            <person name="Retzel E.F."/>
            <person name="Riddle C."/>
            <person name="Sallet E."/>
            <person name="Samain S."/>
            <person name="Samson N."/>
            <person name="Sanders I."/>
            <person name="Saurat O."/>
            <person name="Scarpelli C."/>
            <person name="Schiex T."/>
            <person name="Segurens B."/>
            <person name="Severin A.J."/>
            <person name="Sherrier D.J."/>
            <person name="Shi R."/>
            <person name="Sims S."/>
            <person name="Singer S.R."/>
            <person name="Sinharoy S."/>
            <person name="Sterck L."/>
            <person name="Viollet A."/>
            <person name="Wang B.-B."/>
            <person name="Wang K."/>
            <person name="Wang M."/>
            <person name="Wang X."/>
            <person name="Warfsmann J."/>
            <person name="Weissenbach J."/>
            <person name="White D.D."/>
            <person name="White J.D."/>
            <person name="Wiley G.B."/>
            <person name="Wincker P."/>
            <person name="Xing Y."/>
            <person name="Yang L."/>
            <person name="Yao Z."/>
            <person name="Ying F."/>
            <person name="Zhai J."/>
            <person name="Zhou L."/>
            <person name="Zuber A."/>
            <person name="Denarie J."/>
            <person name="Dixon R.A."/>
            <person name="May G.D."/>
            <person name="Schwartz D.C."/>
            <person name="Rogers J."/>
            <person name="Quetier F."/>
            <person name="Town C.D."/>
            <person name="Roe B.A."/>
        </authorList>
    </citation>
    <scope>NUCLEOTIDE SEQUENCE [LARGE SCALE GENOMIC DNA]</scope>
    <source>
        <strain>cv. Jemalong A17</strain>
    </source>
</reference>
<reference key="2">
    <citation type="journal article" date="2014" name="BMC Genomics">
        <title>An improved genome release (version Mt4.0) for the model legume Medicago truncatula.</title>
        <authorList>
            <person name="Tang H."/>
            <person name="Krishnakumar V."/>
            <person name="Bidwell S."/>
            <person name="Rosen B."/>
            <person name="Chan A."/>
            <person name="Zhou S."/>
            <person name="Gentzbittel L."/>
            <person name="Childs K.L."/>
            <person name="Yandell M."/>
            <person name="Gundlach H."/>
            <person name="Mayer K.F."/>
            <person name="Schwartz D.C."/>
            <person name="Town C.D."/>
        </authorList>
    </citation>
    <scope>GENOME REANNOTATION</scope>
    <source>
        <strain>cv. Jemalong A17</strain>
    </source>
</reference>
<reference key="3">
    <citation type="journal article" date="2018" name="Nat. Plants">
        <title>Whole-genome landscape of Medicago truncatula symbiotic genes.</title>
        <authorList>
            <person name="Pecrix Y."/>
            <person name="Staton S.E."/>
            <person name="Sallet E."/>
            <person name="Lelandais-Briere C."/>
            <person name="Moreau S."/>
            <person name="Carrere S."/>
            <person name="Blein T."/>
            <person name="Jardinaud M.F."/>
            <person name="Latrasse D."/>
            <person name="Zouine M."/>
            <person name="Zahm M."/>
            <person name="Kreplak J."/>
            <person name="Mayjonade B."/>
            <person name="Satge C."/>
            <person name="Perez M."/>
            <person name="Cauet S."/>
            <person name="Marande W."/>
            <person name="Chantry-Darmon C."/>
            <person name="Lopez-Roques C."/>
            <person name="Bouchez O."/>
            <person name="Berard A."/>
            <person name="Debelle F."/>
            <person name="Munos S."/>
            <person name="Bendahmane A."/>
            <person name="Berges H."/>
            <person name="Niebel A."/>
            <person name="Buitink J."/>
            <person name="Frugier F."/>
            <person name="Benhamed M."/>
            <person name="Crespi M."/>
            <person name="Gouzy J."/>
            <person name="Gamas P."/>
        </authorList>
    </citation>
    <scope>NUCLEOTIDE SEQUENCE [LARGE SCALE GENOMIC DNA]</scope>
    <source>
        <strain>cv. Jemalong A17</strain>
    </source>
</reference>
<reference key="4">
    <citation type="journal article" date="2010" name="Plant Physiol.">
        <title>CLE peptides control Medicago truncatula nodulation locally and systemically.</title>
        <authorList>
            <person name="Mortier V."/>
            <person name="Den Herder G."/>
            <person name="Whitford R."/>
            <person name="Van de Velde W."/>
            <person name="Rombauts S."/>
            <person name="D'Haeseleer K."/>
            <person name="Holsters M."/>
            <person name="Goormachtig S."/>
        </authorList>
    </citation>
    <scope>FUNCTION</scope>
    <scope>TISSUE SPECIFICITY</scope>
    <scope>INDUCTION</scope>
</reference>
<reference key="5">
    <citation type="journal article" date="2012" name="Plant J.">
        <title>Nodule numbers are governed by interaction between CLE peptides and cytokinin signaling.</title>
        <authorList>
            <person name="Mortier V."/>
            <person name="De Wever E."/>
            <person name="Vuylsteke M."/>
            <person name="Holsters M."/>
            <person name="Goormachtig S."/>
        </authorList>
    </citation>
    <scope>FUNCTION</scope>
</reference>
<reference key="6">
    <citation type="journal article" date="2017" name="Plant Physiol.">
        <title>ROOT DETERMINED NODULATION1 is required for M. truncatula CLE12, but not CLE13, peptide signaling through the SUNN receptor kinase.</title>
        <authorList>
            <person name="Kassaw T."/>
            <person name="Nowak S."/>
            <person name="Schnabel E."/>
            <person name="Frugoli J."/>
        </authorList>
    </citation>
    <scope>FUNCTION</scope>
</reference>
<proteinExistence type="evidence at transcript level"/>
<dbReference type="EMBL" id="CM001220">
    <property type="protein sequence ID" value="AES89757.1"/>
    <property type="molecule type" value="Genomic_DNA"/>
</dbReference>
<dbReference type="EMBL" id="PSQE01000004">
    <property type="protein sequence ID" value="RHN61839.1"/>
    <property type="molecule type" value="Genomic_DNA"/>
</dbReference>
<dbReference type="RefSeq" id="XP_003607560.1">
    <property type="nucleotide sequence ID" value="XM_003607512.2"/>
</dbReference>
<dbReference type="STRING" id="3880.G7ZZZ3"/>
<dbReference type="GlyCosmos" id="G7ZZZ3">
    <property type="glycosylation" value="1 site, No reported glycans"/>
</dbReference>
<dbReference type="PaxDb" id="3880-AES84781"/>
<dbReference type="EnsemblPlants" id="rna24340">
    <property type="protein sequence ID" value="RHN61839.1"/>
    <property type="gene ID" value="gene24340"/>
</dbReference>
<dbReference type="Gramene" id="rna24340">
    <property type="protein sequence ID" value="RHN61839.1"/>
    <property type="gene ID" value="gene24340"/>
</dbReference>
<dbReference type="HOGENOM" id="CLU_2577465_0_0_1"/>
<dbReference type="OMA" id="FFMSPHA"/>
<dbReference type="Proteomes" id="UP000002051">
    <property type="component" value="Chromosome 4"/>
</dbReference>
<dbReference type="Proteomes" id="UP000265566">
    <property type="component" value="Chromosome 4"/>
</dbReference>
<dbReference type="GO" id="GO:0005576">
    <property type="term" value="C:extracellular region"/>
    <property type="evidence" value="ECO:0007669"/>
    <property type="project" value="UniProtKB-SubCell"/>
</dbReference>
<dbReference type="GO" id="GO:0030154">
    <property type="term" value="P:cell differentiation"/>
    <property type="evidence" value="ECO:0007669"/>
    <property type="project" value="UniProtKB-KW"/>
</dbReference>
<organism>
    <name type="scientific">Medicago truncatula</name>
    <name type="common">Barrel medic</name>
    <name type="synonym">Medicago tribuloides</name>
    <dbReference type="NCBI Taxonomy" id="3880"/>
    <lineage>
        <taxon>Eukaryota</taxon>
        <taxon>Viridiplantae</taxon>
        <taxon>Streptophyta</taxon>
        <taxon>Embryophyta</taxon>
        <taxon>Tracheophyta</taxon>
        <taxon>Spermatophyta</taxon>
        <taxon>Magnoliopsida</taxon>
        <taxon>eudicotyledons</taxon>
        <taxon>Gunneridae</taxon>
        <taxon>Pentapetalae</taxon>
        <taxon>rosids</taxon>
        <taxon>fabids</taxon>
        <taxon>Fabales</taxon>
        <taxon>Fabaceae</taxon>
        <taxon>Papilionoideae</taxon>
        <taxon>50 kb inversion clade</taxon>
        <taxon>NPAAA clade</taxon>
        <taxon>Hologalegina</taxon>
        <taxon>IRL clade</taxon>
        <taxon>Trifolieae</taxon>
        <taxon>Medicago</taxon>
    </lineage>
</organism>
<protein>
    <recommendedName>
        <fullName evidence="8">CLAVATA3/ESR (CLE)-related protein 12</fullName>
        <shortName evidence="7">MtCLE12</shortName>
    </recommendedName>
    <component>
        <recommendedName>
            <fullName evidence="7">CLE12p</fullName>
        </recommendedName>
    </component>
</protein>
<name>CLE12_MEDTR</name>
<evidence type="ECO:0000250" key="1">
    <source>
        <dbReference type="UniProtKB" id="O49519"/>
    </source>
</evidence>
<evidence type="ECO:0000255" key="2"/>
<evidence type="ECO:0000256" key="3">
    <source>
        <dbReference type="SAM" id="MobiDB-lite"/>
    </source>
</evidence>
<evidence type="ECO:0000269" key="4">
    <source>
    </source>
</evidence>
<evidence type="ECO:0000269" key="5">
    <source>
    </source>
</evidence>
<evidence type="ECO:0000269" key="6">
    <source>
    </source>
</evidence>
<evidence type="ECO:0000303" key="7">
    <source>
    </source>
</evidence>
<evidence type="ECO:0000305" key="8"/>
<evidence type="ECO:0000305" key="9">
    <source>
    </source>
</evidence>
<evidence type="ECO:0000312" key="10">
    <source>
        <dbReference type="EMBL" id="AES89757.1"/>
    </source>
</evidence>
<evidence type="ECO:0000312" key="11">
    <source>
        <dbReference type="EMBL" id="RHN61839.1"/>
    </source>
</evidence>
<accession>G7ZZZ3</accession>
<sequence length="81" mass="9181">MENSNKVPISKIGLIMLMIFSTFFMSPHARRLEGGSNIDSQRLLHELMVDRIKQKRSRTDLEDKAVPGDRLSPGGPNHIHN</sequence>